<feature type="chain" id="PRO_1000100570" description="Adenylate kinase">
    <location>
        <begin position="1"/>
        <end position="191"/>
    </location>
</feature>
<feature type="region of interest" description="NMP" evidence="1">
    <location>
        <begin position="34"/>
        <end position="63"/>
    </location>
</feature>
<feature type="region of interest" description="LID" evidence="1">
    <location>
        <begin position="130"/>
        <end position="136"/>
    </location>
</feature>
<feature type="binding site" evidence="1">
    <location>
        <begin position="12"/>
        <end position="17"/>
    </location>
    <ligand>
        <name>ATP</name>
        <dbReference type="ChEBI" id="CHEBI:30616"/>
    </ligand>
</feature>
<feature type="binding site" evidence="1">
    <location>
        <position position="35"/>
    </location>
    <ligand>
        <name>AMP</name>
        <dbReference type="ChEBI" id="CHEBI:456215"/>
    </ligand>
</feature>
<feature type="binding site" evidence="1">
    <location>
        <position position="40"/>
    </location>
    <ligand>
        <name>AMP</name>
        <dbReference type="ChEBI" id="CHEBI:456215"/>
    </ligand>
</feature>
<feature type="binding site" evidence="1">
    <location>
        <begin position="61"/>
        <end position="63"/>
    </location>
    <ligand>
        <name>AMP</name>
        <dbReference type="ChEBI" id="CHEBI:456215"/>
    </ligand>
</feature>
<feature type="binding site" evidence="1">
    <location>
        <begin position="88"/>
        <end position="91"/>
    </location>
    <ligand>
        <name>AMP</name>
        <dbReference type="ChEBI" id="CHEBI:456215"/>
    </ligand>
</feature>
<feature type="binding site" evidence="1">
    <location>
        <position position="95"/>
    </location>
    <ligand>
        <name>AMP</name>
        <dbReference type="ChEBI" id="CHEBI:456215"/>
    </ligand>
</feature>
<feature type="binding site" evidence="1">
    <location>
        <position position="131"/>
    </location>
    <ligand>
        <name>ATP</name>
        <dbReference type="ChEBI" id="CHEBI:30616"/>
    </ligand>
</feature>
<feature type="binding site" evidence="1">
    <location>
        <position position="133"/>
    </location>
    <ligand>
        <name>AMP</name>
        <dbReference type="ChEBI" id="CHEBI:456215"/>
    </ligand>
</feature>
<feature type="binding site" evidence="1">
    <location>
        <position position="145"/>
    </location>
    <ligand>
        <name>AMP</name>
        <dbReference type="ChEBI" id="CHEBI:456215"/>
    </ligand>
</feature>
<feature type="binding site" evidence="1">
    <location>
        <position position="173"/>
    </location>
    <ligand>
        <name>ATP</name>
        <dbReference type="ChEBI" id="CHEBI:30616"/>
    </ligand>
</feature>
<proteinExistence type="inferred from homology"/>
<reference key="1">
    <citation type="journal article" date="2009" name="J. Bacteriol.">
        <title>The complete genome sequence of Helicobacter pylori strain G27.</title>
        <authorList>
            <person name="Baltrus D.A."/>
            <person name="Amieva M.R."/>
            <person name="Covacci A."/>
            <person name="Lowe T.M."/>
            <person name="Merrell D.S."/>
            <person name="Ottemann K.M."/>
            <person name="Stein M."/>
            <person name="Salama N.R."/>
            <person name="Guillemin K."/>
        </authorList>
    </citation>
    <scope>NUCLEOTIDE SEQUENCE [LARGE SCALE GENOMIC DNA]</scope>
    <source>
        <strain>G27</strain>
    </source>
</reference>
<evidence type="ECO:0000255" key="1">
    <source>
        <dbReference type="HAMAP-Rule" id="MF_00235"/>
    </source>
</evidence>
<dbReference type="EC" id="2.7.4.3" evidence="1"/>
<dbReference type="EMBL" id="CP001173">
    <property type="protein sequence ID" value="ACI27338.1"/>
    <property type="molecule type" value="Genomic_DNA"/>
</dbReference>
<dbReference type="RefSeq" id="WP_000811274.1">
    <property type="nucleotide sequence ID" value="NC_011333.1"/>
</dbReference>
<dbReference type="SMR" id="B5Z6Y9"/>
<dbReference type="KEGG" id="hpg:HPG27_578"/>
<dbReference type="HOGENOM" id="CLU_032354_4_1_7"/>
<dbReference type="UniPathway" id="UPA00588">
    <property type="reaction ID" value="UER00649"/>
</dbReference>
<dbReference type="Proteomes" id="UP000001735">
    <property type="component" value="Chromosome"/>
</dbReference>
<dbReference type="GO" id="GO:0005737">
    <property type="term" value="C:cytoplasm"/>
    <property type="evidence" value="ECO:0007669"/>
    <property type="project" value="UniProtKB-SubCell"/>
</dbReference>
<dbReference type="GO" id="GO:0004017">
    <property type="term" value="F:adenylate kinase activity"/>
    <property type="evidence" value="ECO:0007669"/>
    <property type="project" value="UniProtKB-UniRule"/>
</dbReference>
<dbReference type="GO" id="GO:0005524">
    <property type="term" value="F:ATP binding"/>
    <property type="evidence" value="ECO:0007669"/>
    <property type="project" value="UniProtKB-UniRule"/>
</dbReference>
<dbReference type="GO" id="GO:0044209">
    <property type="term" value="P:AMP salvage"/>
    <property type="evidence" value="ECO:0007669"/>
    <property type="project" value="UniProtKB-UniRule"/>
</dbReference>
<dbReference type="CDD" id="cd01428">
    <property type="entry name" value="ADK"/>
    <property type="match status" value="1"/>
</dbReference>
<dbReference type="Gene3D" id="3.40.50.300">
    <property type="entry name" value="P-loop containing nucleotide triphosphate hydrolases"/>
    <property type="match status" value="1"/>
</dbReference>
<dbReference type="HAMAP" id="MF_00235">
    <property type="entry name" value="Adenylate_kinase_Adk"/>
    <property type="match status" value="1"/>
</dbReference>
<dbReference type="InterPro" id="IPR000850">
    <property type="entry name" value="Adenylat/UMP-CMP_kin"/>
</dbReference>
<dbReference type="InterPro" id="IPR033690">
    <property type="entry name" value="Adenylat_kinase_CS"/>
</dbReference>
<dbReference type="InterPro" id="IPR027417">
    <property type="entry name" value="P-loop_NTPase"/>
</dbReference>
<dbReference type="NCBIfam" id="NF001384">
    <property type="entry name" value="PRK00279.2-2"/>
    <property type="match status" value="1"/>
</dbReference>
<dbReference type="PANTHER" id="PTHR23359">
    <property type="entry name" value="NUCLEOTIDE KINASE"/>
    <property type="match status" value="1"/>
</dbReference>
<dbReference type="Pfam" id="PF00406">
    <property type="entry name" value="ADK"/>
    <property type="match status" value="1"/>
</dbReference>
<dbReference type="PRINTS" id="PR00094">
    <property type="entry name" value="ADENYLTKNASE"/>
</dbReference>
<dbReference type="SUPFAM" id="SSF52540">
    <property type="entry name" value="P-loop containing nucleoside triphosphate hydrolases"/>
    <property type="match status" value="1"/>
</dbReference>
<dbReference type="PROSITE" id="PS00113">
    <property type="entry name" value="ADENYLATE_KINASE"/>
    <property type="match status" value="1"/>
</dbReference>
<protein>
    <recommendedName>
        <fullName evidence="1">Adenylate kinase</fullName>
        <shortName evidence="1">AK</shortName>
        <ecNumber evidence="1">2.7.4.3</ecNumber>
    </recommendedName>
    <alternativeName>
        <fullName evidence="1">ATP-AMP transphosphorylase</fullName>
    </alternativeName>
    <alternativeName>
        <fullName evidence="1">ATP:AMP phosphotransferase</fullName>
    </alternativeName>
    <alternativeName>
        <fullName evidence="1">Adenylate monophosphate kinase</fullName>
    </alternativeName>
</protein>
<sequence>MKQLFLIIGAPGSGKTTDAELIAKNNSETIAHFSTGDLLRAESAKKTERGLLIEKFTSQGELVPLEIVVETILSAIKSSSKGIILIDGYPRSVEQMQALDKELNAQNEVVLKSVIEVKVSENTAKERVLGRSRGADDNERVFHNRMRVFLDPLAEIQNFYKNKNVYKAINGERSIEEIVNEMQKYILSFAN</sequence>
<comment type="function">
    <text evidence="1">Catalyzes the reversible transfer of the terminal phosphate group between ATP and AMP. Plays an important role in cellular energy homeostasis and in adenine nucleotide metabolism.</text>
</comment>
<comment type="catalytic activity">
    <reaction evidence="1">
        <text>AMP + ATP = 2 ADP</text>
        <dbReference type="Rhea" id="RHEA:12973"/>
        <dbReference type="ChEBI" id="CHEBI:30616"/>
        <dbReference type="ChEBI" id="CHEBI:456215"/>
        <dbReference type="ChEBI" id="CHEBI:456216"/>
        <dbReference type="EC" id="2.7.4.3"/>
    </reaction>
</comment>
<comment type="pathway">
    <text evidence="1">Purine metabolism; AMP biosynthesis via salvage pathway; AMP from ADP: step 1/1.</text>
</comment>
<comment type="subunit">
    <text evidence="1">Monomer.</text>
</comment>
<comment type="subcellular location">
    <subcellularLocation>
        <location evidence="1">Cytoplasm</location>
    </subcellularLocation>
</comment>
<comment type="domain">
    <text evidence="1">Consists of three domains, a large central CORE domain and two small peripheral domains, NMPbind and LID, which undergo movements during catalysis. The LID domain closes over the site of phosphoryl transfer upon ATP binding. Assembling and dissambling the active center during each catalytic cycle provides an effective means to prevent ATP hydrolysis.</text>
</comment>
<comment type="similarity">
    <text evidence="1">Belongs to the adenylate kinase family.</text>
</comment>
<name>KAD_HELPG</name>
<keyword id="KW-0067">ATP-binding</keyword>
<keyword id="KW-0963">Cytoplasm</keyword>
<keyword id="KW-0418">Kinase</keyword>
<keyword id="KW-0545">Nucleotide biosynthesis</keyword>
<keyword id="KW-0547">Nucleotide-binding</keyword>
<keyword id="KW-1185">Reference proteome</keyword>
<keyword id="KW-0808">Transferase</keyword>
<gene>
    <name evidence="1" type="primary">adk</name>
    <name type="ordered locus">HPG27_578</name>
</gene>
<organism>
    <name type="scientific">Helicobacter pylori (strain G27)</name>
    <dbReference type="NCBI Taxonomy" id="563041"/>
    <lineage>
        <taxon>Bacteria</taxon>
        <taxon>Pseudomonadati</taxon>
        <taxon>Campylobacterota</taxon>
        <taxon>Epsilonproteobacteria</taxon>
        <taxon>Campylobacterales</taxon>
        <taxon>Helicobacteraceae</taxon>
        <taxon>Helicobacter</taxon>
    </lineage>
</organism>
<accession>B5Z6Y9</accession>